<evidence type="ECO:0000255" key="1">
    <source>
        <dbReference type="HAMAP-Rule" id="MF_00059"/>
    </source>
</evidence>
<protein>
    <recommendedName>
        <fullName evidence="1">DNA-directed RNA polymerase subunit alpha</fullName>
        <shortName evidence="1">RNAP subunit alpha</shortName>
        <ecNumber evidence="1">2.7.7.6</ecNumber>
    </recommendedName>
    <alternativeName>
        <fullName evidence="1">RNA polymerase subunit alpha</fullName>
    </alternativeName>
    <alternativeName>
        <fullName evidence="1">Transcriptase subunit alpha</fullName>
    </alternativeName>
</protein>
<gene>
    <name evidence="1" type="primary">rpoA</name>
    <name type="ordered locus">CFF8240_0059</name>
</gene>
<reference key="1">
    <citation type="submission" date="2006-11" db="EMBL/GenBank/DDBJ databases">
        <title>Sequence of Campylobacter fetus subsp. fetus 82-40.</title>
        <authorList>
            <person name="Fouts D.E."/>
            <person name="Nelson K.E."/>
        </authorList>
    </citation>
    <scope>NUCLEOTIDE SEQUENCE [LARGE SCALE GENOMIC DNA]</scope>
    <source>
        <strain>82-40</strain>
    </source>
</reference>
<dbReference type="EC" id="2.7.7.6" evidence="1"/>
<dbReference type="EMBL" id="CP000487">
    <property type="protein sequence ID" value="ABK82913.1"/>
    <property type="molecule type" value="Genomic_DNA"/>
</dbReference>
<dbReference type="RefSeq" id="WP_002848036.1">
    <property type="nucleotide sequence ID" value="NC_008599.1"/>
</dbReference>
<dbReference type="SMR" id="A0RM36"/>
<dbReference type="KEGG" id="cff:CFF8240_0059"/>
<dbReference type="eggNOG" id="COG0202">
    <property type="taxonomic scope" value="Bacteria"/>
</dbReference>
<dbReference type="HOGENOM" id="CLU_053084_0_1_7"/>
<dbReference type="Proteomes" id="UP000000760">
    <property type="component" value="Chromosome"/>
</dbReference>
<dbReference type="GO" id="GO:0005737">
    <property type="term" value="C:cytoplasm"/>
    <property type="evidence" value="ECO:0007669"/>
    <property type="project" value="UniProtKB-ARBA"/>
</dbReference>
<dbReference type="GO" id="GO:0000428">
    <property type="term" value="C:DNA-directed RNA polymerase complex"/>
    <property type="evidence" value="ECO:0007669"/>
    <property type="project" value="UniProtKB-KW"/>
</dbReference>
<dbReference type="GO" id="GO:0003677">
    <property type="term" value="F:DNA binding"/>
    <property type="evidence" value="ECO:0007669"/>
    <property type="project" value="UniProtKB-UniRule"/>
</dbReference>
<dbReference type="GO" id="GO:0003899">
    <property type="term" value="F:DNA-directed RNA polymerase activity"/>
    <property type="evidence" value="ECO:0007669"/>
    <property type="project" value="UniProtKB-UniRule"/>
</dbReference>
<dbReference type="GO" id="GO:0046983">
    <property type="term" value="F:protein dimerization activity"/>
    <property type="evidence" value="ECO:0007669"/>
    <property type="project" value="InterPro"/>
</dbReference>
<dbReference type="GO" id="GO:0006351">
    <property type="term" value="P:DNA-templated transcription"/>
    <property type="evidence" value="ECO:0007669"/>
    <property type="project" value="UniProtKB-UniRule"/>
</dbReference>
<dbReference type="CDD" id="cd06928">
    <property type="entry name" value="RNAP_alpha_NTD"/>
    <property type="match status" value="1"/>
</dbReference>
<dbReference type="Gene3D" id="1.10.150.20">
    <property type="entry name" value="5' to 3' exonuclease, C-terminal subdomain"/>
    <property type="match status" value="1"/>
</dbReference>
<dbReference type="Gene3D" id="2.170.120.12">
    <property type="entry name" value="DNA-directed RNA polymerase, insert domain"/>
    <property type="match status" value="1"/>
</dbReference>
<dbReference type="Gene3D" id="3.30.1360.10">
    <property type="entry name" value="RNA polymerase, RBP11-like subunit"/>
    <property type="match status" value="1"/>
</dbReference>
<dbReference type="HAMAP" id="MF_00059">
    <property type="entry name" value="RNApol_bact_RpoA"/>
    <property type="match status" value="1"/>
</dbReference>
<dbReference type="InterPro" id="IPR011262">
    <property type="entry name" value="DNA-dir_RNA_pol_insert"/>
</dbReference>
<dbReference type="InterPro" id="IPR011263">
    <property type="entry name" value="DNA-dir_RNA_pol_RpoA/D/Rpb3"/>
</dbReference>
<dbReference type="InterPro" id="IPR011773">
    <property type="entry name" value="DNA-dir_RpoA"/>
</dbReference>
<dbReference type="InterPro" id="IPR036603">
    <property type="entry name" value="RBP11-like"/>
</dbReference>
<dbReference type="InterPro" id="IPR011260">
    <property type="entry name" value="RNAP_asu_C"/>
</dbReference>
<dbReference type="InterPro" id="IPR036643">
    <property type="entry name" value="RNApol_insert_sf"/>
</dbReference>
<dbReference type="NCBIfam" id="NF003517">
    <property type="entry name" value="PRK05182.2-3"/>
    <property type="match status" value="1"/>
</dbReference>
<dbReference type="NCBIfam" id="NF003519">
    <property type="entry name" value="PRK05182.2-5"/>
    <property type="match status" value="1"/>
</dbReference>
<dbReference type="NCBIfam" id="TIGR02027">
    <property type="entry name" value="rpoA"/>
    <property type="match status" value="1"/>
</dbReference>
<dbReference type="Pfam" id="PF01000">
    <property type="entry name" value="RNA_pol_A_bac"/>
    <property type="match status" value="1"/>
</dbReference>
<dbReference type="Pfam" id="PF03118">
    <property type="entry name" value="RNA_pol_A_CTD"/>
    <property type="match status" value="1"/>
</dbReference>
<dbReference type="Pfam" id="PF01193">
    <property type="entry name" value="RNA_pol_L"/>
    <property type="match status" value="1"/>
</dbReference>
<dbReference type="SMART" id="SM00662">
    <property type="entry name" value="RPOLD"/>
    <property type="match status" value="1"/>
</dbReference>
<dbReference type="SUPFAM" id="SSF47789">
    <property type="entry name" value="C-terminal domain of RNA polymerase alpha subunit"/>
    <property type="match status" value="1"/>
</dbReference>
<dbReference type="SUPFAM" id="SSF56553">
    <property type="entry name" value="Insert subdomain of RNA polymerase alpha subunit"/>
    <property type="match status" value="1"/>
</dbReference>
<dbReference type="SUPFAM" id="SSF55257">
    <property type="entry name" value="RBP11-like subunits of RNA polymerase"/>
    <property type="match status" value="1"/>
</dbReference>
<accession>A0RM36</accession>
<name>RPOA_CAMFF</name>
<proteinExistence type="inferred from homology"/>
<feature type="chain" id="PRO_0000296791" description="DNA-directed RNA polymerase subunit alpha">
    <location>
        <begin position="1"/>
        <end position="332"/>
    </location>
</feature>
<feature type="region of interest" description="Alpha N-terminal domain (alpha-NTD)" evidence="1">
    <location>
        <begin position="1"/>
        <end position="230"/>
    </location>
</feature>
<feature type="region of interest" description="Alpha C-terminal domain (alpha-CTD)" evidence="1">
    <location>
        <begin position="246"/>
        <end position="332"/>
    </location>
</feature>
<keyword id="KW-0240">DNA-directed RNA polymerase</keyword>
<keyword id="KW-0548">Nucleotidyltransferase</keyword>
<keyword id="KW-0804">Transcription</keyword>
<keyword id="KW-0808">Transferase</keyword>
<sequence>MKKITTSAYMPTEIEVVNVSENVAKIIAYPFETGYAVTLAHPLRRLLYTSTVGFAPTAVKIDGVAHEFDSMRGMLEDVTLFIINLKNLRFKLKNDSKREVIEYSFKGPKEITGIDLNNDIVEIVNPDSYLATINEDAELKFSLIVEKGIGYVPSEEIRDYIDSEYIALDAFFTPVKKAVYEIENVLVEDNPDYEKIVLTVTTDGQVSPIEAFKHSIEAMYKQMSIFNNVLNIDVNMALTSSQNSNEHSKLLESVENLNLSARSFNCLDKADIRYIGELALMEESELKDLKNLGKKSLDEIKAVMAEIGYPFGENTLGDSKEALRKKISELKS</sequence>
<organism>
    <name type="scientific">Campylobacter fetus subsp. fetus (strain 82-40)</name>
    <dbReference type="NCBI Taxonomy" id="360106"/>
    <lineage>
        <taxon>Bacteria</taxon>
        <taxon>Pseudomonadati</taxon>
        <taxon>Campylobacterota</taxon>
        <taxon>Epsilonproteobacteria</taxon>
        <taxon>Campylobacterales</taxon>
        <taxon>Campylobacteraceae</taxon>
        <taxon>Campylobacter</taxon>
    </lineage>
</organism>
<comment type="function">
    <text evidence="1">DNA-dependent RNA polymerase catalyzes the transcription of DNA into RNA using the four ribonucleoside triphosphates as substrates.</text>
</comment>
<comment type="catalytic activity">
    <reaction evidence="1">
        <text>RNA(n) + a ribonucleoside 5'-triphosphate = RNA(n+1) + diphosphate</text>
        <dbReference type="Rhea" id="RHEA:21248"/>
        <dbReference type="Rhea" id="RHEA-COMP:14527"/>
        <dbReference type="Rhea" id="RHEA-COMP:17342"/>
        <dbReference type="ChEBI" id="CHEBI:33019"/>
        <dbReference type="ChEBI" id="CHEBI:61557"/>
        <dbReference type="ChEBI" id="CHEBI:140395"/>
        <dbReference type="EC" id="2.7.7.6"/>
    </reaction>
</comment>
<comment type="subunit">
    <text evidence="1">Homodimer. The RNAP catalytic core consists of 2 alpha, 1 beta, 1 beta' and 1 omega subunit. When a sigma factor is associated with the core the holoenzyme is formed, which can initiate transcription.</text>
</comment>
<comment type="domain">
    <text evidence="1">The N-terminal domain is essential for RNAP assembly and basal transcription, whereas the C-terminal domain is involved in interaction with transcriptional regulators and with upstream promoter elements.</text>
</comment>
<comment type="similarity">
    <text evidence="1">Belongs to the RNA polymerase alpha chain family.</text>
</comment>